<keyword id="KW-0614">Plasmid</keyword>
<comment type="similarity">
    <text evidence="1">Belongs to the UPF0751 family.</text>
</comment>
<name>Y6020_BACC1</name>
<protein>
    <recommendedName>
        <fullName>UPF0751 protein BCE_A0020</fullName>
    </recommendedName>
</protein>
<organism>
    <name type="scientific">Bacillus cereus (strain ATCC 10987 / NRS 248)</name>
    <dbReference type="NCBI Taxonomy" id="222523"/>
    <lineage>
        <taxon>Bacteria</taxon>
        <taxon>Bacillati</taxon>
        <taxon>Bacillota</taxon>
        <taxon>Bacilli</taxon>
        <taxon>Bacillales</taxon>
        <taxon>Bacillaceae</taxon>
        <taxon>Bacillus</taxon>
        <taxon>Bacillus cereus group</taxon>
    </lineage>
</organism>
<evidence type="ECO:0000305" key="1"/>
<dbReference type="EMBL" id="AE017195">
    <property type="protein sequence ID" value="AAS44870.1"/>
    <property type="molecule type" value="Genomic_DNA"/>
</dbReference>
<dbReference type="KEGG" id="bca:BCE_A0020"/>
<dbReference type="HOGENOM" id="CLU_163819_0_0_9"/>
<dbReference type="Proteomes" id="UP000002527">
    <property type="component" value="Plasmid pBc10987"/>
</dbReference>
<dbReference type="InterPro" id="IPR016772">
    <property type="entry name" value="UCP020408"/>
</dbReference>
<dbReference type="Pfam" id="PF10087">
    <property type="entry name" value="DUF2325"/>
    <property type="match status" value="1"/>
</dbReference>
<proteinExistence type="inferred from homology"/>
<sequence>MSTILVLGGSNGRTLEKLAKKRDCQVIFHDGKNHGGVKKTFRSVIKKCDVIVVQKGACGHVSIDVAKEYAKKYDVPLLFNQGFGGTGALEIGLKHLQVA</sequence>
<feature type="chain" id="PRO_0000383580" description="UPF0751 protein BCE_A0020">
    <location>
        <begin position="1"/>
        <end position="99"/>
    </location>
</feature>
<geneLocation type="plasmid">
    <name>pBc10987</name>
</geneLocation>
<gene>
    <name type="ordered locus">BCE_A0020</name>
</gene>
<accession>Q74P74</accession>
<reference key="1">
    <citation type="journal article" date="2004" name="Nucleic Acids Res.">
        <title>The genome sequence of Bacillus cereus ATCC 10987 reveals metabolic adaptations and a large plasmid related to Bacillus anthracis pXO1.</title>
        <authorList>
            <person name="Rasko D.A."/>
            <person name="Ravel J."/>
            <person name="Oekstad O.A."/>
            <person name="Helgason E."/>
            <person name="Cer R.Z."/>
            <person name="Jiang L."/>
            <person name="Shores K.A."/>
            <person name="Fouts D.E."/>
            <person name="Tourasse N.J."/>
            <person name="Angiuoli S.V."/>
            <person name="Kolonay J.F."/>
            <person name="Nelson W.C."/>
            <person name="Kolstoe A.-B."/>
            <person name="Fraser C.M."/>
            <person name="Read T.D."/>
        </authorList>
    </citation>
    <scope>NUCLEOTIDE SEQUENCE [LARGE SCALE GENOMIC DNA]</scope>
    <source>
        <strain>ATCC 10987 / NRS 248</strain>
    </source>
</reference>